<name>PANB_ERWT9</name>
<evidence type="ECO:0000255" key="1">
    <source>
        <dbReference type="HAMAP-Rule" id="MF_00156"/>
    </source>
</evidence>
<proteinExistence type="inferred from homology"/>
<reference key="1">
    <citation type="journal article" date="2008" name="Environ. Microbiol.">
        <title>The genome of Erwinia tasmaniensis strain Et1/99, a non-pathogenic bacterium in the genus Erwinia.</title>
        <authorList>
            <person name="Kube M."/>
            <person name="Migdoll A.M."/>
            <person name="Mueller I."/>
            <person name="Kuhl H."/>
            <person name="Beck A."/>
            <person name="Reinhardt R."/>
            <person name="Geider K."/>
        </authorList>
    </citation>
    <scope>NUCLEOTIDE SEQUENCE [LARGE SCALE GENOMIC DNA]</scope>
    <source>
        <strain>DSM 17950 / CFBP 7177 / CIP 109463 / NCPPB 4357 / Et1/99</strain>
    </source>
</reference>
<feature type="chain" id="PRO_1000096964" description="3-methyl-2-oxobutanoate hydroxymethyltransferase">
    <location>
        <begin position="1"/>
        <end position="264"/>
    </location>
</feature>
<feature type="active site" description="Proton acceptor" evidence="1">
    <location>
        <position position="181"/>
    </location>
</feature>
<feature type="binding site" evidence="1">
    <location>
        <begin position="45"/>
        <end position="46"/>
    </location>
    <ligand>
        <name>3-methyl-2-oxobutanoate</name>
        <dbReference type="ChEBI" id="CHEBI:11851"/>
    </ligand>
</feature>
<feature type="binding site" evidence="1">
    <location>
        <position position="45"/>
    </location>
    <ligand>
        <name>Mg(2+)</name>
        <dbReference type="ChEBI" id="CHEBI:18420"/>
    </ligand>
</feature>
<feature type="binding site" evidence="1">
    <location>
        <position position="84"/>
    </location>
    <ligand>
        <name>3-methyl-2-oxobutanoate</name>
        <dbReference type="ChEBI" id="CHEBI:11851"/>
    </ligand>
</feature>
<feature type="binding site" evidence="1">
    <location>
        <position position="84"/>
    </location>
    <ligand>
        <name>Mg(2+)</name>
        <dbReference type="ChEBI" id="CHEBI:18420"/>
    </ligand>
</feature>
<feature type="binding site" evidence="1">
    <location>
        <position position="112"/>
    </location>
    <ligand>
        <name>3-methyl-2-oxobutanoate</name>
        <dbReference type="ChEBI" id="CHEBI:11851"/>
    </ligand>
</feature>
<feature type="binding site" evidence="1">
    <location>
        <position position="114"/>
    </location>
    <ligand>
        <name>Mg(2+)</name>
        <dbReference type="ChEBI" id="CHEBI:18420"/>
    </ligand>
</feature>
<dbReference type="EC" id="2.1.2.11" evidence="1"/>
<dbReference type="EMBL" id="CU468135">
    <property type="protein sequence ID" value="CAO95903.1"/>
    <property type="molecule type" value="Genomic_DNA"/>
</dbReference>
<dbReference type="RefSeq" id="WP_012440605.1">
    <property type="nucleotide sequence ID" value="NC_010694.1"/>
</dbReference>
<dbReference type="SMR" id="B2VD19"/>
<dbReference type="STRING" id="465817.ETA_08570"/>
<dbReference type="KEGG" id="eta:ETA_08570"/>
<dbReference type="eggNOG" id="COG0413">
    <property type="taxonomic scope" value="Bacteria"/>
</dbReference>
<dbReference type="HOGENOM" id="CLU_036645_1_0_6"/>
<dbReference type="OrthoDB" id="9781789at2"/>
<dbReference type="UniPathway" id="UPA00028">
    <property type="reaction ID" value="UER00003"/>
</dbReference>
<dbReference type="Proteomes" id="UP000001726">
    <property type="component" value="Chromosome"/>
</dbReference>
<dbReference type="GO" id="GO:0005737">
    <property type="term" value="C:cytoplasm"/>
    <property type="evidence" value="ECO:0007669"/>
    <property type="project" value="UniProtKB-SubCell"/>
</dbReference>
<dbReference type="GO" id="GO:0003864">
    <property type="term" value="F:3-methyl-2-oxobutanoate hydroxymethyltransferase activity"/>
    <property type="evidence" value="ECO:0007669"/>
    <property type="project" value="UniProtKB-UniRule"/>
</dbReference>
<dbReference type="GO" id="GO:0000287">
    <property type="term" value="F:magnesium ion binding"/>
    <property type="evidence" value="ECO:0007669"/>
    <property type="project" value="TreeGrafter"/>
</dbReference>
<dbReference type="GO" id="GO:0015940">
    <property type="term" value="P:pantothenate biosynthetic process"/>
    <property type="evidence" value="ECO:0007669"/>
    <property type="project" value="UniProtKB-UniRule"/>
</dbReference>
<dbReference type="CDD" id="cd06557">
    <property type="entry name" value="KPHMT-like"/>
    <property type="match status" value="1"/>
</dbReference>
<dbReference type="FunFam" id="3.20.20.60:FF:000003">
    <property type="entry name" value="3-methyl-2-oxobutanoate hydroxymethyltransferase"/>
    <property type="match status" value="1"/>
</dbReference>
<dbReference type="Gene3D" id="3.20.20.60">
    <property type="entry name" value="Phosphoenolpyruvate-binding domains"/>
    <property type="match status" value="1"/>
</dbReference>
<dbReference type="HAMAP" id="MF_00156">
    <property type="entry name" value="PanB"/>
    <property type="match status" value="1"/>
</dbReference>
<dbReference type="InterPro" id="IPR003700">
    <property type="entry name" value="Pantoate_hydroxy_MeTrfase"/>
</dbReference>
<dbReference type="InterPro" id="IPR015813">
    <property type="entry name" value="Pyrv/PenolPyrv_kinase-like_dom"/>
</dbReference>
<dbReference type="InterPro" id="IPR040442">
    <property type="entry name" value="Pyrv_kinase-like_dom_sf"/>
</dbReference>
<dbReference type="NCBIfam" id="TIGR00222">
    <property type="entry name" value="panB"/>
    <property type="match status" value="1"/>
</dbReference>
<dbReference type="NCBIfam" id="NF001452">
    <property type="entry name" value="PRK00311.1"/>
    <property type="match status" value="1"/>
</dbReference>
<dbReference type="PANTHER" id="PTHR20881">
    <property type="entry name" value="3-METHYL-2-OXOBUTANOATE HYDROXYMETHYLTRANSFERASE"/>
    <property type="match status" value="1"/>
</dbReference>
<dbReference type="PANTHER" id="PTHR20881:SF0">
    <property type="entry name" value="3-METHYL-2-OXOBUTANOATE HYDROXYMETHYLTRANSFERASE"/>
    <property type="match status" value="1"/>
</dbReference>
<dbReference type="Pfam" id="PF02548">
    <property type="entry name" value="Pantoate_transf"/>
    <property type="match status" value="1"/>
</dbReference>
<dbReference type="PIRSF" id="PIRSF000388">
    <property type="entry name" value="Pantoate_hydroxy_MeTrfase"/>
    <property type="match status" value="1"/>
</dbReference>
<dbReference type="SUPFAM" id="SSF51621">
    <property type="entry name" value="Phosphoenolpyruvate/pyruvate domain"/>
    <property type="match status" value="1"/>
</dbReference>
<keyword id="KW-0963">Cytoplasm</keyword>
<keyword id="KW-0460">Magnesium</keyword>
<keyword id="KW-0479">Metal-binding</keyword>
<keyword id="KW-0566">Pantothenate biosynthesis</keyword>
<keyword id="KW-1185">Reference proteome</keyword>
<keyword id="KW-0808">Transferase</keyword>
<comment type="function">
    <text evidence="1">Catalyzes the reversible reaction in which hydroxymethyl group from 5,10-methylenetetrahydrofolate is transferred onto alpha-ketoisovalerate to form ketopantoate.</text>
</comment>
<comment type="catalytic activity">
    <reaction evidence="1">
        <text>3-methyl-2-oxobutanoate + (6R)-5,10-methylene-5,6,7,8-tetrahydrofolate + H2O = 2-dehydropantoate + (6S)-5,6,7,8-tetrahydrofolate</text>
        <dbReference type="Rhea" id="RHEA:11824"/>
        <dbReference type="ChEBI" id="CHEBI:11561"/>
        <dbReference type="ChEBI" id="CHEBI:11851"/>
        <dbReference type="ChEBI" id="CHEBI:15377"/>
        <dbReference type="ChEBI" id="CHEBI:15636"/>
        <dbReference type="ChEBI" id="CHEBI:57453"/>
        <dbReference type="EC" id="2.1.2.11"/>
    </reaction>
</comment>
<comment type="cofactor">
    <cofactor evidence="1">
        <name>Mg(2+)</name>
        <dbReference type="ChEBI" id="CHEBI:18420"/>
    </cofactor>
    <text evidence="1">Binds 1 Mg(2+) ion per subunit.</text>
</comment>
<comment type="pathway">
    <text evidence="1">Cofactor biosynthesis; (R)-pantothenate biosynthesis; (R)-pantoate from 3-methyl-2-oxobutanoate: step 1/2.</text>
</comment>
<comment type="subunit">
    <text evidence="1">Homodecamer; pentamer of dimers.</text>
</comment>
<comment type="subcellular location">
    <subcellularLocation>
        <location evidence="1">Cytoplasm</location>
    </subcellularLocation>
</comment>
<comment type="similarity">
    <text evidence="1">Belongs to the PanB family.</text>
</comment>
<accession>B2VD19</accession>
<sequence length="264" mass="28301">MKPTTVSTLRQWKQQGEKFASITAYDFSFARLFADEGIQVMLVGDSLGMVVQGHDSTLPVTLADIVYHTEVVRRGAPAALLLADLPFMSYATPEQTFDSAARLMRAGANMVKLEGGKWLAETVKQLTERAVPVCGHLGLTPQSVNIFGGYKVQGRDAEAADLLLEDALALEAAGMQLLVLECVPVALAKRVTEALSIPVIGIGAGNATDGQILVMHDAFGITGGHIPKFAKNFLAETGDIRAAVRQYVEEVKAGSYPAEQHSFQ</sequence>
<protein>
    <recommendedName>
        <fullName evidence="1">3-methyl-2-oxobutanoate hydroxymethyltransferase</fullName>
        <ecNumber evidence="1">2.1.2.11</ecNumber>
    </recommendedName>
    <alternativeName>
        <fullName evidence="1">Ketopantoate hydroxymethyltransferase</fullName>
        <shortName evidence="1">KPHMT</shortName>
    </alternativeName>
</protein>
<organism>
    <name type="scientific">Erwinia tasmaniensis (strain DSM 17950 / CFBP 7177 / CIP 109463 / NCPPB 4357 / Et1/99)</name>
    <dbReference type="NCBI Taxonomy" id="465817"/>
    <lineage>
        <taxon>Bacteria</taxon>
        <taxon>Pseudomonadati</taxon>
        <taxon>Pseudomonadota</taxon>
        <taxon>Gammaproteobacteria</taxon>
        <taxon>Enterobacterales</taxon>
        <taxon>Erwiniaceae</taxon>
        <taxon>Erwinia</taxon>
    </lineage>
</organism>
<gene>
    <name evidence="1" type="primary">panB</name>
    <name type="ordered locus">ETA_08570</name>
</gene>